<keyword id="KW-1185">Reference proteome</keyword>
<keyword id="KW-0687">Ribonucleoprotein</keyword>
<keyword id="KW-0689">Ribosomal protein</keyword>
<feature type="chain" id="PRO_1000146103" description="Small ribosomal subunit protein eS6">
    <location>
        <begin position="1"/>
        <end position="143"/>
    </location>
</feature>
<gene>
    <name evidence="1" type="primary">rps6e</name>
    <name type="ordered locus">Mboo_2295</name>
</gene>
<organism>
    <name type="scientific">Methanoregula boonei (strain DSM 21154 / JCM 14090 / 6A8)</name>
    <dbReference type="NCBI Taxonomy" id="456442"/>
    <lineage>
        <taxon>Archaea</taxon>
        <taxon>Methanobacteriati</taxon>
        <taxon>Methanobacteriota</taxon>
        <taxon>Stenosarchaea group</taxon>
        <taxon>Methanomicrobia</taxon>
        <taxon>Methanomicrobiales</taxon>
        <taxon>Methanoregulaceae</taxon>
        <taxon>Methanoregula</taxon>
    </lineage>
</organism>
<accession>A7IAP8</accession>
<protein>
    <recommendedName>
        <fullName evidence="1">Small ribosomal subunit protein eS6</fullName>
    </recommendedName>
    <alternativeName>
        <fullName evidence="2">30S ribosomal protein S6e</fullName>
    </alternativeName>
</protein>
<reference key="1">
    <citation type="journal article" date="2015" name="Microbiology">
        <title>Genome of Methanoregula boonei 6A8 reveals adaptations to oligotrophic peatland environments.</title>
        <authorList>
            <person name="Braeuer S."/>
            <person name="Cadillo-Quiroz H."/>
            <person name="Kyrpides N."/>
            <person name="Woyke T."/>
            <person name="Goodwin L."/>
            <person name="Detter C."/>
            <person name="Podell S."/>
            <person name="Yavitt J.B."/>
            <person name="Zinder S.H."/>
        </authorList>
    </citation>
    <scope>NUCLEOTIDE SEQUENCE [LARGE SCALE GENOMIC DNA]</scope>
    <source>
        <strain>DSM 21154 / JCM 14090 / 6A8</strain>
    </source>
</reference>
<proteinExistence type="inferred from homology"/>
<comment type="similarity">
    <text evidence="1">Belongs to the eukaryotic ribosomal protein eS6 family.</text>
</comment>
<dbReference type="EMBL" id="CP000780">
    <property type="protein sequence ID" value="ABS56809.1"/>
    <property type="molecule type" value="Genomic_DNA"/>
</dbReference>
<dbReference type="RefSeq" id="WP_012107869.1">
    <property type="nucleotide sequence ID" value="NC_009712.1"/>
</dbReference>
<dbReference type="SMR" id="A7IAP8"/>
<dbReference type="STRING" id="456442.Mboo_2295"/>
<dbReference type="GeneID" id="5411250"/>
<dbReference type="KEGG" id="mbn:Mboo_2295"/>
<dbReference type="eggNOG" id="arCOG01946">
    <property type="taxonomic scope" value="Archaea"/>
</dbReference>
<dbReference type="HOGENOM" id="CLU_109671_1_1_2"/>
<dbReference type="OrthoDB" id="7793at2157"/>
<dbReference type="Proteomes" id="UP000002408">
    <property type="component" value="Chromosome"/>
</dbReference>
<dbReference type="GO" id="GO:1990904">
    <property type="term" value="C:ribonucleoprotein complex"/>
    <property type="evidence" value="ECO:0007669"/>
    <property type="project" value="UniProtKB-KW"/>
</dbReference>
<dbReference type="GO" id="GO:0005840">
    <property type="term" value="C:ribosome"/>
    <property type="evidence" value="ECO:0007669"/>
    <property type="project" value="UniProtKB-KW"/>
</dbReference>
<dbReference type="GO" id="GO:0003735">
    <property type="term" value="F:structural constituent of ribosome"/>
    <property type="evidence" value="ECO:0007669"/>
    <property type="project" value="InterPro"/>
</dbReference>
<dbReference type="GO" id="GO:0006412">
    <property type="term" value="P:translation"/>
    <property type="evidence" value="ECO:0007669"/>
    <property type="project" value="UniProtKB-UniRule"/>
</dbReference>
<dbReference type="HAMAP" id="MF_00512">
    <property type="entry name" value="Ribosomal_eS6"/>
    <property type="match status" value="1"/>
</dbReference>
<dbReference type="InterPro" id="IPR001377">
    <property type="entry name" value="Ribosomal_eS6"/>
</dbReference>
<dbReference type="InterPro" id="IPR020924">
    <property type="entry name" value="Ribosomal_eS6_arc"/>
</dbReference>
<dbReference type="NCBIfam" id="NF003294">
    <property type="entry name" value="PRK04290.1-3"/>
    <property type="match status" value="1"/>
</dbReference>
<dbReference type="PANTHER" id="PTHR11502">
    <property type="entry name" value="40S RIBOSOMAL PROTEIN S6"/>
    <property type="match status" value="1"/>
</dbReference>
<dbReference type="Pfam" id="PF01092">
    <property type="entry name" value="Ribosomal_S6e"/>
    <property type="match status" value="1"/>
</dbReference>
<dbReference type="SMART" id="SM01405">
    <property type="entry name" value="Ribosomal_S6e"/>
    <property type="match status" value="1"/>
</dbReference>
<sequence>MVELKVVVSDPKTGRAYNVDASTGAAGAVVGKKIGDEVDAGPLGLAGYKILITGGSDQTGTPARKSLPGAGRRKLLLAEGVGFHPVMEGERKRKMIRAHQITPEFVQVNARVTAYGEKTLDELFPKVEGAEKKEKTKERKVRK</sequence>
<name>RS6E_METB6</name>
<evidence type="ECO:0000255" key="1">
    <source>
        <dbReference type="HAMAP-Rule" id="MF_00512"/>
    </source>
</evidence>
<evidence type="ECO:0000305" key="2"/>